<gene>
    <name evidence="1" type="primary">argC</name>
    <name type="ordered locus">lin1633</name>
</gene>
<feature type="chain" id="PRO_0000112417" description="N-acetyl-gamma-glutamyl-phosphate reductase">
    <location>
        <begin position="1"/>
        <end position="343"/>
    </location>
</feature>
<feature type="active site" evidence="1">
    <location>
        <position position="147"/>
    </location>
</feature>
<keyword id="KW-0028">Amino-acid biosynthesis</keyword>
<keyword id="KW-0055">Arginine biosynthesis</keyword>
<keyword id="KW-0963">Cytoplasm</keyword>
<keyword id="KW-0521">NADP</keyword>
<keyword id="KW-0560">Oxidoreductase</keyword>
<proteinExistence type="inferred from homology"/>
<dbReference type="EC" id="1.2.1.38" evidence="1"/>
<dbReference type="EMBL" id="AL596169">
    <property type="protein sequence ID" value="CAC96864.1"/>
    <property type="molecule type" value="Genomic_DNA"/>
</dbReference>
<dbReference type="PIR" id="AH1636">
    <property type="entry name" value="AH1636"/>
</dbReference>
<dbReference type="RefSeq" id="WP_003762472.1">
    <property type="nucleotide sequence ID" value="NC_003212.1"/>
</dbReference>
<dbReference type="SMR" id="Q92BB7"/>
<dbReference type="STRING" id="272626.gene:17565964"/>
<dbReference type="GeneID" id="93235015"/>
<dbReference type="KEGG" id="lin:argC"/>
<dbReference type="eggNOG" id="COG0002">
    <property type="taxonomic scope" value="Bacteria"/>
</dbReference>
<dbReference type="HOGENOM" id="CLU_006384_0_1_9"/>
<dbReference type="OrthoDB" id="9801289at2"/>
<dbReference type="UniPathway" id="UPA00068">
    <property type="reaction ID" value="UER00108"/>
</dbReference>
<dbReference type="Proteomes" id="UP000002513">
    <property type="component" value="Chromosome"/>
</dbReference>
<dbReference type="GO" id="GO:0005737">
    <property type="term" value="C:cytoplasm"/>
    <property type="evidence" value="ECO:0007669"/>
    <property type="project" value="UniProtKB-SubCell"/>
</dbReference>
<dbReference type="GO" id="GO:0003942">
    <property type="term" value="F:N-acetyl-gamma-glutamyl-phosphate reductase activity"/>
    <property type="evidence" value="ECO:0007669"/>
    <property type="project" value="UniProtKB-UniRule"/>
</dbReference>
<dbReference type="GO" id="GO:0051287">
    <property type="term" value="F:NAD binding"/>
    <property type="evidence" value="ECO:0007669"/>
    <property type="project" value="InterPro"/>
</dbReference>
<dbReference type="GO" id="GO:0070401">
    <property type="term" value="F:NADP+ binding"/>
    <property type="evidence" value="ECO:0007669"/>
    <property type="project" value="InterPro"/>
</dbReference>
<dbReference type="GO" id="GO:0006526">
    <property type="term" value="P:L-arginine biosynthetic process"/>
    <property type="evidence" value="ECO:0007669"/>
    <property type="project" value="UniProtKB-UniRule"/>
</dbReference>
<dbReference type="CDD" id="cd23934">
    <property type="entry name" value="AGPR_1_C"/>
    <property type="match status" value="1"/>
</dbReference>
<dbReference type="CDD" id="cd17895">
    <property type="entry name" value="AGPR_1_N"/>
    <property type="match status" value="1"/>
</dbReference>
<dbReference type="FunFam" id="3.30.360.10:FF:000014">
    <property type="entry name" value="N-acetyl-gamma-glutamyl-phosphate reductase"/>
    <property type="match status" value="1"/>
</dbReference>
<dbReference type="Gene3D" id="3.30.360.10">
    <property type="entry name" value="Dihydrodipicolinate Reductase, domain 2"/>
    <property type="match status" value="1"/>
</dbReference>
<dbReference type="Gene3D" id="3.40.50.720">
    <property type="entry name" value="NAD(P)-binding Rossmann-like Domain"/>
    <property type="match status" value="1"/>
</dbReference>
<dbReference type="HAMAP" id="MF_00150">
    <property type="entry name" value="ArgC_type1"/>
    <property type="match status" value="1"/>
</dbReference>
<dbReference type="InterPro" id="IPR023013">
    <property type="entry name" value="AGPR_AS"/>
</dbReference>
<dbReference type="InterPro" id="IPR000706">
    <property type="entry name" value="AGPR_type-1"/>
</dbReference>
<dbReference type="InterPro" id="IPR036291">
    <property type="entry name" value="NAD(P)-bd_dom_sf"/>
</dbReference>
<dbReference type="InterPro" id="IPR050085">
    <property type="entry name" value="NAGSA_dehydrogenase"/>
</dbReference>
<dbReference type="InterPro" id="IPR000534">
    <property type="entry name" value="Semialdehyde_DH_NAD-bd"/>
</dbReference>
<dbReference type="NCBIfam" id="TIGR01850">
    <property type="entry name" value="argC"/>
    <property type="match status" value="1"/>
</dbReference>
<dbReference type="PANTHER" id="PTHR32338:SF10">
    <property type="entry name" value="N-ACETYL-GAMMA-GLUTAMYL-PHOSPHATE REDUCTASE, CHLOROPLASTIC-RELATED"/>
    <property type="match status" value="1"/>
</dbReference>
<dbReference type="PANTHER" id="PTHR32338">
    <property type="entry name" value="N-ACETYL-GAMMA-GLUTAMYL-PHOSPHATE REDUCTASE, CHLOROPLASTIC-RELATED-RELATED"/>
    <property type="match status" value="1"/>
</dbReference>
<dbReference type="Pfam" id="PF01118">
    <property type="entry name" value="Semialdhyde_dh"/>
    <property type="match status" value="1"/>
</dbReference>
<dbReference type="Pfam" id="PF22698">
    <property type="entry name" value="Semialdhyde_dhC_1"/>
    <property type="match status" value="1"/>
</dbReference>
<dbReference type="SMART" id="SM00859">
    <property type="entry name" value="Semialdhyde_dh"/>
    <property type="match status" value="1"/>
</dbReference>
<dbReference type="SUPFAM" id="SSF55347">
    <property type="entry name" value="Glyceraldehyde-3-phosphate dehydrogenase-like, C-terminal domain"/>
    <property type="match status" value="1"/>
</dbReference>
<dbReference type="SUPFAM" id="SSF51735">
    <property type="entry name" value="NAD(P)-binding Rossmann-fold domains"/>
    <property type="match status" value="1"/>
</dbReference>
<dbReference type="PROSITE" id="PS01224">
    <property type="entry name" value="ARGC"/>
    <property type="match status" value="1"/>
</dbReference>
<sequence length="343" mass="37643">MKVSIIGATGYGGLELIRLLHQHSSVDIATLHSFSAQSETLANFYPHLKGLEASPLEKINPAEIIEKSDTVFIATPSGIAKDVALPYIDAGLNVIDLSGDFRLKDNQLYEKWYGKKAAPEDYLAKAEYGLAEFRDNELATFIANPGCYATATLLGLAPLVKKQLIDPTSIIVDAKSGISGAGKVPSKSTHFTETNENMTLYKMNSHQHIPEIMQQLTKWDKSIPAIQFSTSLIPITRGIFTTIYVKPKNPITQQELHQLYESTYEHASFVRIQAENTYPTVKQVTASNYCDIGLAYNEKTNVITIVSVIDNLVKGAAGQAIQNLNIMANFAESDGLGFIPVYP</sequence>
<reference key="1">
    <citation type="journal article" date="2001" name="Science">
        <title>Comparative genomics of Listeria species.</title>
        <authorList>
            <person name="Glaser P."/>
            <person name="Frangeul L."/>
            <person name="Buchrieser C."/>
            <person name="Rusniok C."/>
            <person name="Amend A."/>
            <person name="Baquero F."/>
            <person name="Berche P."/>
            <person name="Bloecker H."/>
            <person name="Brandt P."/>
            <person name="Chakraborty T."/>
            <person name="Charbit A."/>
            <person name="Chetouani F."/>
            <person name="Couve E."/>
            <person name="de Daruvar A."/>
            <person name="Dehoux P."/>
            <person name="Domann E."/>
            <person name="Dominguez-Bernal G."/>
            <person name="Duchaud E."/>
            <person name="Durant L."/>
            <person name="Dussurget O."/>
            <person name="Entian K.-D."/>
            <person name="Fsihi H."/>
            <person name="Garcia-del Portillo F."/>
            <person name="Garrido P."/>
            <person name="Gautier L."/>
            <person name="Goebel W."/>
            <person name="Gomez-Lopez N."/>
            <person name="Hain T."/>
            <person name="Hauf J."/>
            <person name="Jackson D."/>
            <person name="Jones L.-M."/>
            <person name="Kaerst U."/>
            <person name="Kreft J."/>
            <person name="Kuhn M."/>
            <person name="Kunst F."/>
            <person name="Kurapkat G."/>
            <person name="Madueno E."/>
            <person name="Maitournam A."/>
            <person name="Mata Vicente J."/>
            <person name="Ng E."/>
            <person name="Nedjari H."/>
            <person name="Nordsiek G."/>
            <person name="Novella S."/>
            <person name="de Pablos B."/>
            <person name="Perez-Diaz J.-C."/>
            <person name="Purcell R."/>
            <person name="Remmel B."/>
            <person name="Rose M."/>
            <person name="Schlueter T."/>
            <person name="Simoes N."/>
            <person name="Tierrez A."/>
            <person name="Vazquez-Boland J.-A."/>
            <person name="Voss H."/>
            <person name="Wehland J."/>
            <person name="Cossart P."/>
        </authorList>
    </citation>
    <scope>NUCLEOTIDE SEQUENCE [LARGE SCALE GENOMIC DNA]</scope>
    <source>
        <strain>ATCC BAA-680 / CLIP 11262</strain>
    </source>
</reference>
<evidence type="ECO:0000255" key="1">
    <source>
        <dbReference type="HAMAP-Rule" id="MF_00150"/>
    </source>
</evidence>
<protein>
    <recommendedName>
        <fullName evidence="1">N-acetyl-gamma-glutamyl-phosphate reductase</fullName>
        <shortName evidence="1">AGPR</shortName>
        <ecNumber evidence="1">1.2.1.38</ecNumber>
    </recommendedName>
    <alternativeName>
        <fullName evidence="1">N-acetyl-glutamate semialdehyde dehydrogenase</fullName>
        <shortName evidence="1">NAGSA dehydrogenase</shortName>
    </alternativeName>
</protein>
<accession>Q92BB7</accession>
<comment type="function">
    <text evidence="1">Catalyzes the NADPH-dependent reduction of N-acetyl-5-glutamyl phosphate to yield N-acetyl-L-glutamate 5-semialdehyde.</text>
</comment>
<comment type="catalytic activity">
    <reaction evidence="1">
        <text>N-acetyl-L-glutamate 5-semialdehyde + phosphate + NADP(+) = N-acetyl-L-glutamyl 5-phosphate + NADPH + H(+)</text>
        <dbReference type="Rhea" id="RHEA:21588"/>
        <dbReference type="ChEBI" id="CHEBI:15378"/>
        <dbReference type="ChEBI" id="CHEBI:29123"/>
        <dbReference type="ChEBI" id="CHEBI:43474"/>
        <dbReference type="ChEBI" id="CHEBI:57783"/>
        <dbReference type="ChEBI" id="CHEBI:57936"/>
        <dbReference type="ChEBI" id="CHEBI:58349"/>
        <dbReference type="EC" id="1.2.1.38"/>
    </reaction>
</comment>
<comment type="pathway">
    <text evidence="1">Amino-acid biosynthesis; L-arginine biosynthesis; N(2)-acetyl-L-ornithine from L-glutamate: step 3/4.</text>
</comment>
<comment type="subcellular location">
    <subcellularLocation>
        <location evidence="1">Cytoplasm</location>
    </subcellularLocation>
</comment>
<comment type="similarity">
    <text evidence="1">Belongs to the NAGSA dehydrogenase family. Type 1 subfamily.</text>
</comment>
<name>ARGC_LISIN</name>
<organism>
    <name type="scientific">Listeria innocua serovar 6a (strain ATCC BAA-680 / CLIP 11262)</name>
    <dbReference type="NCBI Taxonomy" id="272626"/>
    <lineage>
        <taxon>Bacteria</taxon>
        <taxon>Bacillati</taxon>
        <taxon>Bacillota</taxon>
        <taxon>Bacilli</taxon>
        <taxon>Bacillales</taxon>
        <taxon>Listeriaceae</taxon>
        <taxon>Listeria</taxon>
    </lineage>
</organism>